<organism>
    <name type="scientific">Haemophilus influenzae (strain ATCC 51907 / DSM 11121 / KW20 / Rd)</name>
    <dbReference type="NCBI Taxonomy" id="71421"/>
    <lineage>
        <taxon>Bacteria</taxon>
        <taxon>Pseudomonadati</taxon>
        <taxon>Pseudomonadota</taxon>
        <taxon>Gammaproteobacteria</taxon>
        <taxon>Pasteurellales</taxon>
        <taxon>Pasteurellaceae</taxon>
        <taxon>Haemophilus</taxon>
    </lineage>
</organism>
<name>TSAD_HAEIN</name>
<keyword id="KW-0012">Acyltransferase</keyword>
<keyword id="KW-0963">Cytoplasm</keyword>
<keyword id="KW-0408">Iron</keyword>
<keyword id="KW-0479">Metal-binding</keyword>
<keyword id="KW-1185">Reference proteome</keyword>
<keyword id="KW-0808">Transferase</keyword>
<keyword id="KW-0819">tRNA processing</keyword>
<evidence type="ECO:0000255" key="1">
    <source>
        <dbReference type="HAMAP-Rule" id="MF_01445"/>
    </source>
</evidence>
<proteinExistence type="inferred from homology"/>
<gene>
    <name evidence="1" type="primary">tsaD</name>
    <name type="synonym">gcp</name>
    <name type="ordered locus">HI_0530</name>
</gene>
<accession>P43764</accession>
<protein>
    <recommendedName>
        <fullName evidence="1">tRNA N6-adenosine threonylcarbamoyltransferase</fullName>
        <ecNumber evidence="1">2.3.1.234</ecNumber>
    </recommendedName>
    <alternativeName>
        <fullName evidence="1">N6-L-threonylcarbamoyladenine synthase</fullName>
        <shortName evidence="1">t(6)A synthase</shortName>
    </alternativeName>
    <alternativeName>
        <fullName evidence="1">t(6)A37 threonylcarbamoyladenosine biosynthesis protein TsaD</fullName>
    </alternativeName>
    <alternativeName>
        <fullName evidence="1">tRNA threonylcarbamoyladenosine biosynthesis protein TsaD</fullName>
    </alternativeName>
</protein>
<sequence>MKILGIETSCDETGVAIYDEEKGLIANQLYTQIALHADYGGVVPELASRDHIRKTAPLIKAALEEANLTASDIDGIAYTSGPGLVGALLVGATIARSLAYAWNVPAIGVHHMEGHLLAPMLDDNSPHFPFVALLVSGGHTQLVRVDGVGKYEVIGESIDDAAGEAFDKTAKLLGLDYPGGAALSRLAEKGTPNRFTFPRPMTDRAGLDFSFSGLKTFAANTVNQAIKNEGELIEQTKADIAYAFQDAVVDTLAIKCKRALKETGYKRLVIAGGVSANKKLRETLAHLMQNLGGEVFYPQPQFCTDNGAMIAYTGFLRLKQGQHSDLAIDVKPRWAMAELPAI</sequence>
<reference key="1">
    <citation type="journal article" date="1995" name="Science">
        <title>Whole-genome random sequencing and assembly of Haemophilus influenzae Rd.</title>
        <authorList>
            <person name="Fleischmann R.D."/>
            <person name="Adams M.D."/>
            <person name="White O."/>
            <person name="Clayton R.A."/>
            <person name="Kirkness E.F."/>
            <person name="Kerlavage A.R."/>
            <person name="Bult C.J."/>
            <person name="Tomb J.-F."/>
            <person name="Dougherty B.A."/>
            <person name="Merrick J.M."/>
            <person name="McKenney K."/>
            <person name="Sutton G.G."/>
            <person name="FitzHugh W."/>
            <person name="Fields C.A."/>
            <person name="Gocayne J.D."/>
            <person name="Scott J.D."/>
            <person name="Shirley R."/>
            <person name="Liu L.-I."/>
            <person name="Glodek A."/>
            <person name="Kelley J.M."/>
            <person name="Weidman J.F."/>
            <person name="Phillips C.A."/>
            <person name="Spriggs T."/>
            <person name="Hedblom E."/>
            <person name="Cotton M.D."/>
            <person name="Utterback T.R."/>
            <person name="Hanna M.C."/>
            <person name="Nguyen D.T."/>
            <person name="Saudek D.M."/>
            <person name="Brandon R.C."/>
            <person name="Fine L.D."/>
            <person name="Fritchman J.L."/>
            <person name="Fuhrmann J.L."/>
            <person name="Geoghagen N.S.M."/>
            <person name="Gnehm C.L."/>
            <person name="McDonald L.A."/>
            <person name="Small K.V."/>
            <person name="Fraser C.M."/>
            <person name="Smith H.O."/>
            <person name="Venter J.C."/>
        </authorList>
    </citation>
    <scope>NUCLEOTIDE SEQUENCE [LARGE SCALE GENOMIC DNA]</scope>
    <source>
        <strain>ATCC 51907 / DSM 11121 / KW20 / Rd</strain>
    </source>
</reference>
<dbReference type="EC" id="2.3.1.234" evidence="1"/>
<dbReference type="EMBL" id="L42023">
    <property type="protein sequence ID" value="AAC22187.1"/>
    <property type="molecule type" value="Genomic_DNA"/>
</dbReference>
<dbReference type="PIR" id="H64074">
    <property type="entry name" value="H64074"/>
</dbReference>
<dbReference type="RefSeq" id="NP_438688.1">
    <property type="nucleotide sequence ID" value="NC_000907.1"/>
</dbReference>
<dbReference type="SMR" id="P43764"/>
<dbReference type="STRING" id="71421.HI_0530"/>
<dbReference type="DNASU" id="950725"/>
<dbReference type="EnsemblBacteria" id="AAC22187">
    <property type="protein sequence ID" value="AAC22187"/>
    <property type="gene ID" value="HI_0530"/>
</dbReference>
<dbReference type="KEGG" id="hin:HI_0530"/>
<dbReference type="PATRIC" id="fig|71421.8.peg.549"/>
<dbReference type="eggNOG" id="COG0533">
    <property type="taxonomic scope" value="Bacteria"/>
</dbReference>
<dbReference type="HOGENOM" id="CLU_023208_0_0_6"/>
<dbReference type="OrthoDB" id="9806197at2"/>
<dbReference type="PhylomeDB" id="P43764"/>
<dbReference type="BioCyc" id="HINF71421:G1GJ1-543-MONOMER"/>
<dbReference type="Proteomes" id="UP000000579">
    <property type="component" value="Chromosome"/>
</dbReference>
<dbReference type="GO" id="GO:0005737">
    <property type="term" value="C:cytoplasm"/>
    <property type="evidence" value="ECO:0007669"/>
    <property type="project" value="UniProtKB-SubCell"/>
</dbReference>
<dbReference type="GO" id="GO:0005506">
    <property type="term" value="F:iron ion binding"/>
    <property type="evidence" value="ECO:0007669"/>
    <property type="project" value="UniProtKB-UniRule"/>
</dbReference>
<dbReference type="GO" id="GO:0061711">
    <property type="term" value="F:N(6)-L-threonylcarbamoyladenine synthase activity"/>
    <property type="evidence" value="ECO:0007669"/>
    <property type="project" value="UniProtKB-EC"/>
</dbReference>
<dbReference type="GO" id="GO:0002949">
    <property type="term" value="P:tRNA threonylcarbamoyladenosine modification"/>
    <property type="evidence" value="ECO:0007669"/>
    <property type="project" value="UniProtKB-UniRule"/>
</dbReference>
<dbReference type="CDD" id="cd24133">
    <property type="entry name" value="ASKHA_NBD_TsaD_bac"/>
    <property type="match status" value="1"/>
</dbReference>
<dbReference type="FunFam" id="3.30.420.40:FF:000012">
    <property type="entry name" value="tRNA N6-adenosine threonylcarbamoyltransferase"/>
    <property type="match status" value="1"/>
</dbReference>
<dbReference type="FunFam" id="3.30.420.40:FF:000031">
    <property type="entry name" value="tRNA N6-adenosine threonylcarbamoyltransferase"/>
    <property type="match status" value="1"/>
</dbReference>
<dbReference type="Gene3D" id="3.30.420.40">
    <property type="match status" value="2"/>
</dbReference>
<dbReference type="HAMAP" id="MF_01445">
    <property type="entry name" value="TsaD"/>
    <property type="match status" value="1"/>
</dbReference>
<dbReference type="InterPro" id="IPR043129">
    <property type="entry name" value="ATPase_NBD"/>
</dbReference>
<dbReference type="InterPro" id="IPR000905">
    <property type="entry name" value="Gcp-like_dom"/>
</dbReference>
<dbReference type="InterPro" id="IPR017861">
    <property type="entry name" value="KAE1/TsaD"/>
</dbReference>
<dbReference type="InterPro" id="IPR017860">
    <property type="entry name" value="Peptidase_M22_CS"/>
</dbReference>
<dbReference type="InterPro" id="IPR022450">
    <property type="entry name" value="TsaD"/>
</dbReference>
<dbReference type="NCBIfam" id="TIGR00329">
    <property type="entry name" value="gcp_kae1"/>
    <property type="match status" value="1"/>
</dbReference>
<dbReference type="NCBIfam" id="TIGR03723">
    <property type="entry name" value="T6A_TsaD_YgjD"/>
    <property type="match status" value="1"/>
</dbReference>
<dbReference type="PANTHER" id="PTHR11735">
    <property type="entry name" value="TRNA N6-ADENOSINE THREONYLCARBAMOYLTRANSFERASE"/>
    <property type="match status" value="1"/>
</dbReference>
<dbReference type="PANTHER" id="PTHR11735:SF6">
    <property type="entry name" value="TRNA N6-ADENOSINE THREONYLCARBAMOYLTRANSFERASE, MITOCHONDRIAL"/>
    <property type="match status" value="1"/>
</dbReference>
<dbReference type="Pfam" id="PF00814">
    <property type="entry name" value="TsaD"/>
    <property type="match status" value="1"/>
</dbReference>
<dbReference type="PRINTS" id="PR00789">
    <property type="entry name" value="OSIALOPTASE"/>
</dbReference>
<dbReference type="SUPFAM" id="SSF53067">
    <property type="entry name" value="Actin-like ATPase domain"/>
    <property type="match status" value="1"/>
</dbReference>
<dbReference type="PROSITE" id="PS01016">
    <property type="entry name" value="GLYCOPROTEASE"/>
    <property type="match status" value="1"/>
</dbReference>
<comment type="function">
    <text evidence="1">Required for the formation of a threonylcarbamoyl group on adenosine at position 37 (t(6)A37) in tRNAs that read codons beginning with adenine. Is involved in the transfer of the threonylcarbamoyl moiety of threonylcarbamoyl-AMP (TC-AMP) to the N6 group of A37, together with TsaE and TsaB. TsaD likely plays a direct catalytic role in this reaction.</text>
</comment>
<comment type="catalytic activity">
    <reaction evidence="1">
        <text>L-threonylcarbamoyladenylate + adenosine(37) in tRNA = N(6)-L-threonylcarbamoyladenosine(37) in tRNA + AMP + H(+)</text>
        <dbReference type="Rhea" id="RHEA:37059"/>
        <dbReference type="Rhea" id="RHEA-COMP:10162"/>
        <dbReference type="Rhea" id="RHEA-COMP:10163"/>
        <dbReference type="ChEBI" id="CHEBI:15378"/>
        <dbReference type="ChEBI" id="CHEBI:73682"/>
        <dbReference type="ChEBI" id="CHEBI:74411"/>
        <dbReference type="ChEBI" id="CHEBI:74418"/>
        <dbReference type="ChEBI" id="CHEBI:456215"/>
        <dbReference type="EC" id="2.3.1.234"/>
    </reaction>
</comment>
<comment type="cofactor">
    <cofactor evidence="1">
        <name>Fe(2+)</name>
        <dbReference type="ChEBI" id="CHEBI:29033"/>
    </cofactor>
    <text evidence="1">Binds 1 Fe(2+) ion per subunit.</text>
</comment>
<comment type="subcellular location">
    <subcellularLocation>
        <location evidence="1">Cytoplasm</location>
    </subcellularLocation>
</comment>
<comment type="similarity">
    <text evidence="1">Belongs to the KAE1 / TsaD family.</text>
</comment>
<feature type="chain" id="PRO_0000096964" description="tRNA N6-adenosine threonylcarbamoyltransferase">
    <location>
        <begin position="1"/>
        <end position="342"/>
    </location>
</feature>
<feature type="binding site" evidence="1">
    <location>
        <position position="111"/>
    </location>
    <ligand>
        <name>Fe cation</name>
        <dbReference type="ChEBI" id="CHEBI:24875"/>
    </ligand>
</feature>
<feature type="binding site" evidence="1">
    <location>
        <position position="115"/>
    </location>
    <ligand>
        <name>Fe cation</name>
        <dbReference type="ChEBI" id="CHEBI:24875"/>
    </ligand>
</feature>
<feature type="binding site" evidence="1">
    <location>
        <begin position="134"/>
        <end position="138"/>
    </location>
    <ligand>
        <name>substrate</name>
    </ligand>
</feature>
<feature type="binding site" evidence="1">
    <location>
        <position position="167"/>
    </location>
    <ligand>
        <name>substrate</name>
    </ligand>
</feature>
<feature type="binding site" evidence="1">
    <location>
        <position position="180"/>
    </location>
    <ligand>
        <name>substrate</name>
    </ligand>
</feature>
<feature type="binding site" evidence="1">
    <location>
        <position position="277"/>
    </location>
    <ligand>
        <name>substrate</name>
    </ligand>
</feature>
<feature type="binding site" evidence="1">
    <location>
        <position position="305"/>
    </location>
    <ligand>
        <name>Fe cation</name>
        <dbReference type="ChEBI" id="CHEBI:24875"/>
    </ligand>
</feature>